<keyword id="KW-0025">Alternative splicing</keyword>
<keyword id="KW-0106">Calcium</keyword>
<keyword id="KW-1003">Cell membrane</keyword>
<keyword id="KW-0963">Cytoplasm</keyword>
<keyword id="KW-0333">Golgi apparatus</keyword>
<keyword id="KW-0472">Membrane</keyword>
<keyword id="KW-0479">Metal-binding</keyword>
<keyword id="KW-1185">Reference proteome</keyword>
<keyword id="KW-0677">Repeat</keyword>
<keyword id="KW-0812">Transmembrane</keyword>
<keyword id="KW-1133">Transmembrane helix</keyword>
<reference key="1">
    <citation type="journal article" date="2001" name="Mol. Genet. Metab.">
        <title>Identification of a human brain-specific gene, calneuron 1, a new member of the calmodulin superfamily.</title>
        <authorList>
            <person name="Wu Y.-Q."/>
            <person name="Lin X."/>
            <person name="Liu C.-M."/>
            <person name="Jamrich M."/>
            <person name="Shaffer L.G."/>
        </authorList>
    </citation>
    <scope>NUCLEOTIDE SEQUENCE [MRNA] (ISOFORM 2)</scope>
    <scope>TISSUE SPECIFICITY</scope>
    <source>
        <tissue>Brain</tissue>
    </source>
</reference>
<reference key="2">
    <citation type="submission" date="2000-08" db="EMBL/GenBank/DDBJ databases">
        <title>Calcium-binding protein with similarity to calmodulin.</title>
        <authorList>
            <person name="Haeseleer F."/>
            <person name="Palczewski K."/>
        </authorList>
    </citation>
    <scope>NUCLEOTIDE SEQUENCE [MRNA] (ISOFORM 1)</scope>
    <source>
        <tissue>Retina</tissue>
    </source>
</reference>
<reference key="3">
    <citation type="journal article" date="2004" name="Genome Res.">
        <title>The status, quality, and expansion of the NIH full-length cDNA project: the Mammalian Gene Collection (MGC).</title>
        <authorList>
            <consortium name="The MGC Project Team"/>
        </authorList>
    </citation>
    <scope>NUCLEOTIDE SEQUENCE [LARGE SCALE MRNA] (ISOFORM 2)</scope>
    <source>
        <tissue>Lung</tissue>
    </source>
</reference>
<reference key="4">
    <citation type="journal article" date="2003" name="Nature">
        <title>The DNA sequence of human chromosome 7.</title>
        <authorList>
            <person name="Hillier L.W."/>
            <person name="Fulton R.S."/>
            <person name="Fulton L.A."/>
            <person name="Graves T.A."/>
            <person name="Pepin K.H."/>
            <person name="Wagner-McPherson C."/>
            <person name="Layman D."/>
            <person name="Maas J."/>
            <person name="Jaeger S."/>
            <person name="Walker R."/>
            <person name="Wylie K."/>
            <person name="Sekhon M."/>
            <person name="Becker M.C."/>
            <person name="O'Laughlin M.D."/>
            <person name="Schaller M.E."/>
            <person name="Fewell G.A."/>
            <person name="Delehaunty K.D."/>
            <person name="Miner T.L."/>
            <person name="Nash W.E."/>
            <person name="Cordes M."/>
            <person name="Du H."/>
            <person name="Sun H."/>
            <person name="Edwards J."/>
            <person name="Bradshaw-Cordum H."/>
            <person name="Ali J."/>
            <person name="Andrews S."/>
            <person name="Isak A."/>
            <person name="Vanbrunt A."/>
            <person name="Nguyen C."/>
            <person name="Du F."/>
            <person name="Lamar B."/>
            <person name="Courtney L."/>
            <person name="Kalicki J."/>
            <person name="Ozersky P."/>
            <person name="Bielicki L."/>
            <person name="Scott K."/>
            <person name="Holmes A."/>
            <person name="Harkins R."/>
            <person name="Harris A."/>
            <person name="Strong C.M."/>
            <person name="Hou S."/>
            <person name="Tomlinson C."/>
            <person name="Dauphin-Kohlberg S."/>
            <person name="Kozlowicz-Reilly A."/>
            <person name="Leonard S."/>
            <person name="Rohlfing T."/>
            <person name="Rock S.M."/>
            <person name="Tin-Wollam A.-M."/>
            <person name="Abbott A."/>
            <person name="Minx P."/>
            <person name="Maupin R."/>
            <person name="Strowmatt C."/>
            <person name="Latreille P."/>
            <person name="Miller N."/>
            <person name="Johnson D."/>
            <person name="Murray J."/>
            <person name="Woessner J.P."/>
            <person name="Wendl M.C."/>
            <person name="Yang S.-P."/>
            <person name="Schultz B.R."/>
            <person name="Wallis J.W."/>
            <person name="Spieth J."/>
            <person name="Bieri T.A."/>
            <person name="Nelson J.O."/>
            <person name="Berkowicz N."/>
            <person name="Wohldmann P.E."/>
            <person name="Cook L.L."/>
            <person name="Hickenbotham M.T."/>
            <person name="Eldred J."/>
            <person name="Williams D."/>
            <person name="Bedell J.A."/>
            <person name="Mardis E.R."/>
            <person name="Clifton S.W."/>
            <person name="Chissoe S.L."/>
            <person name="Marra M.A."/>
            <person name="Raymond C."/>
            <person name="Haugen E."/>
            <person name="Gillett W."/>
            <person name="Zhou Y."/>
            <person name="James R."/>
            <person name="Phelps K."/>
            <person name="Iadanoto S."/>
            <person name="Bubb K."/>
            <person name="Simms E."/>
            <person name="Levy R."/>
            <person name="Clendenning J."/>
            <person name="Kaul R."/>
            <person name="Kent W.J."/>
            <person name="Furey T.S."/>
            <person name="Baertsch R.A."/>
            <person name="Brent M.R."/>
            <person name="Keibler E."/>
            <person name="Flicek P."/>
            <person name="Bork P."/>
            <person name="Suyama M."/>
            <person name="Bailey J.A."/>
            <person name="Portnoy M.E."/>
            <person name="Torrents D."/>
            <person name="Chinwalla A.T."/>
            <person name="Gish W.R."/>
            <person name="Eddy S.R."/>
            <person name="McPherson J.D."/>
            <person name="Olson M.V."/>
            <person name="Eichler E.E."/>
            <person name="Green E.D."/>
            <person name="Waterston R.H."/>
            <person name="Wilson R.K."/>
        </authorList>
    </citation>
    <scope>NUCLEOTIDE SEQUENCE [LARGE SCALE GENOMIC DNA]</scope>
</reference>
<reference key="5">
    <citation type="submission" date="2005-07" db="EMBL/GenBank/DDBJ databases">
        <authorList>
            <person name="Mural R.J."/>
            <person name="Istrail S."/>
            <person name="Sutton G.G."/>
            <person name="Florea L."/>
            <person name="Halpern A.L."/>
            <person name="Mobarry C.M."/>
            <person name="Lippert R."/>
            <person name="Walenz B."/>
            <person name="Shatkay H."/>
            <person name="Dew I."/>
            <person name="Miller J.R."/>
            <person name="Flanigan M.J."/>
            <person name="Edwards N.J."/>
            <person name="Bolanos R."/>
            <person name="Fasulo D."/>
            <person name="Halldorsson B.V."/>
            <person name="Hannenhalli S."/>
            <person name="Turner R."/>
            <person name="Yooseph S."/>
            <person name="Lu F."/>
            <person name="Nusskern D.R."/>
            <person name="Shue B.C."/>
            <person name="Zheng X.H."/>
            <person name="Zhong F."/>
            <person name="Delcher A.L."/>
            <person name="Huson D.H."/>
            <person name="Kravitz S.A."/>
            <person name="Mouchard L."/>
            <person name="Reinert K."/>
            <person name="Remington K.A."/>
            <person name="Clark A.G."/>
            <person name="Waterman M.S."/>
            <person name="Eichler E.E."/>
            <person name="Adams M.D."/>
            <person name="Hunkapiller M.W."/>
            <person name="Myers E.W."/>
            <person name="Venter J.C."/>
        </authorList>
    </citation>
    <scope>NUCLEOTIDE SEQUENCE [LARGE SCALE GENOMIC DNA]</scope>
</reference>
<reference key="6">
    <citation type="journal article" date="2009" name="Biochem. Biophys. Res. Commun.">
        <title>Membrane targeting of the EF-hand containing calcium-sensing proteins CaBP7 and CaBP8.</title>
        <authorList>
            <person name="McCue H.V."/>
            <person name="Burgoyne R.D."/>
            <person name="Haynes L.P."/>
        </authorList>
    </citation>
    <scope>SUBCELLULAR LOCATION</scope>
    <scope>DOMAIN</scope>
</reference>
<protein>
    <recommendedName>
        <fullName>Calcium-binding protein 8</fullName>
        <shortName>CaBP8</shortName>
    </recommendedName>
    <alternativeName>
        <fullName>Calneuron I</fullName>
    </alternativeName>
    <alternativeName>
        <fullName>Calneuron-1</fullName>
    </alternativeName>
</protein>
<proteinExistence type="evidence at protein level"/>
<gene>
    <name type="primary">CALN1</name>
    <name type="synonym">CABP8</name>
</gene>
<dbReference type="EMBL" id="AF282250">
    <property type="protein sequence ID" value="AAK15155.1"/>
    <property type="molecule type" value="mRNA"/>
</dbReference>
<dbReference type="EMBL" id="AY007302">
    <property type="protein sequence ID" value="AAG09620.1"/>
    <property type="status" value="ALT_INIT"/>
    <property type="molecule type" value="mRNA"/>
</dbReference>
<dbReference type="EMBL" id="BC020200">
    <property type="protein sequence ID" value="AAH20200.1"/>
    <property type="molecule type" value="mRNA"/>
</dbReference>
<dbReference type="EMBL" id="AC004845">
    <property type="status" value="NOT_ANNOTATED_CDS"/>
    <property type="molecule type" value="Genomic_DNA"/>
</dbReference>
<dbReference type="EMBL" id="AC004905">
    <property type="status" value="NOT_ANNOTATED_CDS"/>
    <property type="molecule type" value="Genomic_DNA"/>
</dbReference>
<dbReference type="EMBL" id="AC005011">
    <property type="status" value="NOT_ANNOTATED_CDS"/>
    <property type="molecule type" value="Genomic_DNA"/>
</dbReference>
<dbReference type="EMBL" id="AC006334">
    <property type="status" value="NOT_ANNOTATED_CDS"/>
    <property type="molecule type" value="Genomic_DNA"/>
</dbReference>
<dbReference type="EMBL" id="AC067941">
    <property type="status" value="NOT_ANNOTATED_CDS"/>
    <property type="molecule type" value="Genomic_DNA"/>
</dbReference>
<dbReference type="EMBL" id="AC092424">
    <property type="status" value="NOT_ANNOTATED_CDS"/>
    <property type="molecule type" value="Genomic_DNA"/>
</dbReference>
<dbReference type="EMBL" id="AC092785">
    <property type="status" value="NOT_ANNOTATED_CDS"/>
    <property type="molecule type" value="Genomic_DNA"/>
</dbReference>
<dbReference type="EMBL" id="CH471140">
    <property type="protein sequence ID" value="EAX07902.1"/>
    <property type="molecule type" value="Genomic_DNA"/>
</dbReference>
<dbReference type="CCDS" id="CCDS47603.1">
    <molecule id="Q9BXU9-2"/>
</dbReference>
<dbReference type="CCDS" id="CCDS5541.1">
    <molecule id="Q9BXU9-1"/>
</dbReference>
<dbReference type="RefSeq" id="NP_001017440.1">
    <molecule id="Q9BXU9-1"/>
    <property type="nucleotide sequence ID" value="NM_001017440.3"/>
</dbReference>
<dbReference type="RefSeq" id="NP_001350389.1">
    <molecule id="Q9BXU9-1"/>
    <property type="nucleotide sequence ID" value="NM_001363460.1"/>
</dbReference>
<dbReference type="RefSeq" id="NP_113656.2">
    <molecule id="Q9BXU9-2"/>
    <property type="nucleotide sequence ID" value="NM_031468.4"/>
</dbReference>
<dbReference type="RefSeq" id="XP_011514897.1">
    <property type="nucleotide sequence ID" value="XM_011516595.1"/>
</dbReference>
<dbReference type="RefSeq" id="XP_011514898.1">
    <molecule id="Q9BXU9-1"/>
    <property type="nucleotide sequence ID" value="XM_011516596.3"/>
</dbReference>
<dbReference type="RefSeq" id="XP_011514899.1">
    <molecule id="Q9BXU9-1"/>
    <property type="nucleotide sequence ID" value="XM_011516597.2"/>
</dbReference>
<dbReference type="RefSeq" id="XP_011514901.1">
    <property type="nucleotide sequence ID" value="XM_011516599.1"/>
</dbReference>
<dbReference type="RefSeq" id="XP_016868164.1">
    <property type="nucleotide sequence ID" value="XM_017012675.1"/>
</dbReference>
<dbReference type="RefSeq" id="XP_016868165.1">
    <molecule id="Q9BXU9-2"/>
    <property type="nucleotide sequence ID" value="XM_017012676.3"/>
</dbReference>
<dbReference type="RefSeq" id="XP_016868167.1">
    <molecule id="Q9BXU9-1"/>
    <property type="nucleotide sequence ID" value="XM_017012678.2"/>
</dbReference>
<dbReference type="RefSeq" id="XP_016868168.1">
    <molecule id="Q9BXU9-1"/>
    <property type="nucleotide sequence ID" value="XM_017012679.1"/>
</dbReference>
<dbReference type="RefSeq" id="XP_016868169.1">
    <molecule id="Q9BXU9-1"/>
    <property type="nucleotide sequence ID" value="XM_017012680.2"/>
</dbReference>
<dbReference type="RefSeq" id="XP_016868170.1">
    <property type="nucleotide sequence ID" value="XM_017012681.1"/>
</dbReference>
<dbReference type="RefSeq" id="XP_016868171.1">
    <molecule id="Q9BXU9-1"/>
    <property type="nucleotide sequence ID" value="XM_017012682.2"/>
</dbReference>
<dbReference type="RefSeq" id="XP_016868172.1">
    <molecule id="Q9BXU9-1"/>
    <property type="nucleotide sequence ID" value="XM_017012683.2"/>
</dbReference>
<dbReference type="RefSeq" id="XP_054215123.1">
    <molecule id="Q9BXU9-1"/>
    <property type="nucleotide sequence ID" value="XM_054359148.1"/>
</dbReference>
<dbReference type="RefSeq" id="XP_054215124.1">
    <molecule id="Q9BXU9-1"/>
    <property type="nucleotide sequence ID" value="XM_054359149.1"/>
</dbReference>
<dbReference type="RefSeq" id="XP_054215125.1">
    <molecule id="Q9BXU9-1"/>
    <property type="nucleotide sequence ID" value="XM_054359150.1"/>
</dbReference>
<dbReference type="RefSeq" id="XP_054215126.1">
    <molecule id="Q9BXU9-1"/>
    <property type="nucleotide sequence ID" value="XM_054359151.1"/>
</dbReference>
<dbReference type="RefSeq" id="XP_054215127.1">
    <molecule id="Q9BXU9-1"/>
    <property type="nucleotide sequence ID" value="XM_054359152.1"/>
</dbReference>
<dbReference type="RefSeq" id="XP_054215128.1">
    <molecule id="Q9BXU9-1"/>
    <property type="nucleotide sequence ID" value="XM_054359153.1"/>
</dbReference>
<dbReference type="RefSeq" id="XP_054215129.1">
    <molecule id="Q9BXU9-1"/>
    <property type="nucleotide sequence ID" value="XM_054359154.1"/>
</dbReference>
<dbReference type="SMR" id="Q9BXU9"/>
<dbReference type="BioGRID" id="123732">
    <property type="interactions" value="12"/>
</dbReference>
<dbReference type="FunCoup" id="Q9BXU9">
    <property type="interactions" value="57"/>
</dbReference>
<dbReference type="IntAct" id="Q9BXU9">
    <property type="interactions" value="12"/>
</dbReference>
<dbReference type="STRING" id="9606.ENSP00000378690"/>
<dbReference type="PhosphoSitePlus" id="Q9BXU9"/>
<dbReference type="BioMuta" id="CALN1"/>
<dbReference type="DMDM" id="20177867"/>
<dbReference type="MassIVE" id="Q9BXU9"/>
<dbReference type="PaxDb" id="9606-ENSP00000378690"/>
<dbReference type="PeptideAtlas" id="Q9BXU9"/>
<dbReference type="ProteomicsDB" id="79523">
    <molecule id="Q9BXU9-1"/>
</dbReference>
<dbReference type="Antibodypedia" id="28332">
    <property type="antibodies" value="160 antibodies from 29 providers"/>
</dbReference>
<dbReference type="DNASU" id="83698"/>
<dbReference type="Ensembl" id="ENST00000329008.9">
    <molecule id="Q9BXU9-1"/>
    <property type="protein sequence ID" value="ENSP00000332498.5"/>
    <property type="gene ID" value="ENSG00000183166.12"/>
</dbReference>
<dbReference type="Ensembl" id="ENST00000395275.7">
    <molecule id="Q9BXU9-2"/>
    <property type="protein sequence ID" value="ENSP00000378690.2"/>
    <property type="gene ID" value="ENSG00000183166.12"/>
</dbReference>
<dbReference type="Ensembl" id="ENST00000395276.6">
    <molecule id="Q9BXU9-1"/>
    <property type="protein sequence ID" value="ENSP00000378691.2"/>
    <property type="gene ID" value="ENSG00000183166.12"/>
</dbReference>
<dbReference type="Ensembl" id="ENST00000431984.5">
    <molecule id="Q9BXU9-1"/>
    <property type="protein sequence ID" value="ENSP00000410704.1"/>
    <property type="gene ID" value="ENSG00000183166.12"/>
</dbReference>
<dbReference type="GeneID" id="83698"/>
<dbReference type="KEGG" id="hsa:83698"/>
<dbReference type="MANE-Select" id="ENST00000395275.7">
    <property type="protein sequence ID" value="ENSP00000378690.2"/>
    <property type="RefSeq nucleotide sequence ID" value="NM_031468.4"/>
    <property type="RefSeq protein sequence ID" value="NP_113656.2"/>
</dbReference>
<dbReference type="UCSC" id="uc003twa.5">
    <molecule id="Q9BXU9-2"/>
    <property type="organism name" value="human"/>
</dbReference>
<dbReference type="AGR" id="HGNC:13248"/>
<dbReference type="CTD" id="83698"/>
<dbReference type="DisGeNET" id="83698"/>
<dbReference type="GeneCards" id="CALN1"/>
<dbReference type="HGNC" id="HGNC:13248">
    <property type="gene designation" value="CALN1"/>
</dbReference>
<dbReference type="HPA" id="ENSG00000183166">
    <property type="expression patterns" value="Tissue enhanced (brain, lymphoid tissue)"/>
</dbReference>
<dbReference type="MIM" id="607176">
    <property type="type" value="gene"/>
</dbReference>
<dbReference type="neXtProt" id="NX_Q9BXU9"/>
<dbReference type="OpenTargets" id="ENSG00000183166"/>
<dbReference type="PharmGKB" id="PA26045"/>
<dbReference type="VEuPathDB" id="HostDB:ENSG00000183166"/>
<dbReference type="eggNOG" id="KOG0027">
    <property type="taxonomic scope" value="Eukaryota"/>
</dbReference>
<dbReference type="GeneTree" id="ENSGT00940000159212"/>
<dbReference type="HOGENOM" id="CLU_106115_0_0_1"/>
<dbReference type="InParanoid" id="Q9BXU9"/>
<dbReference type="OMA" id="DMQRMTL"/>
<dbReference type="OrthoDB" id="26525at2759"/>
<dbReference type="PAN-GO" id="Q9BXU9">
    <property type="GO annotations" value="1 GO annotation based on evolutionary models"/>
</dbReference>
<dbReference type="PhylomeDB" id="Q9BXU9"/>
<dbReference type="TreeFam" id="TF331025"/>
<dbReference type="PathwayCommons" id="Q9BXU9"/>
<dbReference type="SignaLink" id="Q9BXU9"/>
<dbReference type="BioGRID-ORCS" id="83698">
    <property type="hits" value="22 hits in 1145 CRISPR screens"/>
</dbReference>
<dbReference type="ChiTaRS" id="CALN1">
    <property type="organism name" value="human"/>
</dbReference>
<dbReference type="GeneWiki" id="CALN1"/>
<dbReference type="GenomeRNAi" id="83698"/>
<dbReference type="Pharos" id="Q9BXU9">
    <property type="development level" value="Tbio"/>
</dbReference>
<dbReference type="PRO" id="PR:Q9BXU9"/>
<dbReference type="Proteomes" id="UP000005640">
    <property type="component" value="Chromosome 7"/>
</dbReference>
<dbReference type="RNAct" id="Q9BXU9">
    <property type="molecule type" value="protein"/>
</dbReference>
<dbReference type="Bgee" id="ENSG00000183166">
    <property type="expression patterns" value="Expressed in cerebellar vermis and 108 other cell types or tissues"/>
</dbReference>
<dbReference type="ExpressionAtlas" id="Q9BXU9">
    <property type="expression patterns" value="baseline and differential"/>
</dbReference>
<dbReference type="GO" id="GO:0048471">
    <property type="term" value="C:perinuclear region of cytoplasm"/>
    <property type="evidence" value="ECO:0007669"/>
    <property type="project" value="UniProtKB-SubCell"/>
</dbReference>
<dbReference type="GO" id="GO:0005886">
    <property type="term" value="C:plasma membrane"/>
    <property type="evidence" value="ECO:0007669"/>
    <property type="project" value="UniProtKB-SubCell"/>
</dbReference>
<dbReference type="GO" id="GO:0032588">
    <property type="term" value="C:trans-Golgi network membrane"/>
    <property type="evidence" value="ECO:0000314"/>
    <property type="project" value="MGI"/>
</dbReference>
<dbReference type="GO" id="GO:0005509">
    <property type="term" value="F:calcium ion binding"/>
    <property type="evidence" value="ECO:0007669"/>
    <property type="project" value="InterPro"/>
</dbReference>
<dbReference type="CDD" id="cd00051">
    <property type="entry name" value="EFh"/>
    <property type="match status" value="1"/>
</dbReference>
<dbReference type="FunFam" id="1.10.238.10:FF:000115">
    <property type="entry name" value="Calcium-binding protein 8"/>
    <property type="match status" value="1"/>
</dbReference>
<dbReference type="Gene3D" id="1.10.238.10">
    <property type="entry name" value="EF-hand"/>
    <property type="match status" value="1"/>
</dbReference>
<dbReference type="InterPro" id="IPR051111">
    <property type="entry name" value="Ca-binding_regulatory"/>
</dbReference>
<dbReference type="InterPro" id="IPR011992">
    <property type="entry name" value="EF-hand-dom_pair"/>
</dbReference>
<dbReference type="InterPro" id="IPR018247">
    <property type="entry name" value="EF_Hand_1_Ca_BS"/>
</dbReference>
<dbReference type="InterPro" id="IPR002048">
    <property type="entry name" value="EF_hand_dom"/>
</dbReference>
<dbReference type="InterPro" id="IPR001751">
    <property type="entry name" value="S100/CaBP7/8-like_CS"/>
</dbReference>
<dbReference type="PANTHER" id="PTHR46311:SF3">
    <property type="entry name" value="CALCIUM-BINDING PROTEIN 8"/>
    <property type="match status" value="1"/>
</dbReference>
<dbReference type="PANTHER" id="PTHR46311">
    <property type="entry name" value="CALCIUM-BINDING PROTEIN 8-RELATED"/>
    <property type="match status" value="1"/>
</dbReference>
<dbReference type="Pfam" id="PF13499">
    <property type="entry name" value="EF-hand_7"/>
    <property type="match status" value="1"/>
</dbReference>
<dbReference type="SMART" id="SM00054">
    <property type="entry name" value="EFh"/>
    <property type="match status" value="2"/>
</dbReference>
<dbReference type="SUPFAM" id="SSF47473">
    <property type="entry name" value="EF-hand"/>
    <property type="match status" value="1"/>
</dbReference>
<dbReference type="PROSITE" id="PS00018">
    <property type="entry name" value="EF_HAND_1"/>
    <property type="match status" value="2"/>
</dbReference>
<dbReference type="PROSITE" id="PS50222">
    <property type="entry name" value="EF_HAND_2"/>
    <property type="match status" value="2"/>
</dbReference>
<accession>Q9BXU9</accession>
<accession>J3KQA7</accession>
<comment type="function">
    <text evidence="1">Negatively regulates Golgi-to-plasma membrane trafficking by interacting with PI4KB and inhibiting its activity. May play a role in the physiology of neurons and is potentially important in memory and learning.</text>
</comment>
<comment type="subunit">
    <text evidence="1">Interacts with PI4KB. This binding competes with FREQ/NCS1 binding in a calcium-dependent manner.</text>
</comment>
<comment type="interaction">
    <interactant intactId="EBI-12187137">
        <id>Q9BXU9</id>
    </interactant>
    <interactant intactId="EBI-8639143">
        <id>Q96LL9</id>
        <label>DNAJC30</label>
    </interactant>
    <organismsDiffer>false</organismsDiffer>
    <experiments>3</experiments>
</comment>
<comment type="interaction">
    <interactant intactId="EBI-12187137">
        <id>Q9BXU9</id>
    </interactant>
    <interactant intactId="EBI-743099">
        <id>Q969F0</id>
        <label>FATE1</label>
    </interactant>
    <organismsDiffer>false</organismsDiffer>
    <experiments>3</experiments>
</comment>
<comment type="interaction">
    <interactant intactId="EBI-12187137">
        <id>Q9BXU9</id>
    </interactant>
    <interactant intactId="EBI-2830566">
        <id>Q9H400</id>
        <label>LIME1</label>
    </interactant>
    <organismsDiffer>false</organismsDiffer>
    <experiments>3</experiments>
</comment>
<comment type="interaction">
    <interactant intactId="EBI-12187137">
        <id>Q9BXU9</id>
    </interactant>
    <interactant intactId="EBI-3932027">
        <id>P21145</id>
        <label>MAL</label>
    </interactant>
    <organismsDiffer>false</organismsDiffer>
    <experiments>3</experiments>
</comment>
<comment type="interaction">
    <interactant intactId="EBI-12187137">
        <id>Q9BXU9</id>
    </interactant>
    <interactant intactId="EBI-12188331">
        <id>P60201-2</id>
        <label>PLP1</label>
    </interactant>
    <organismsDiffer>false</organismsDiffer>
    <experiments>3</experiments>
</comment>
<comment type="interaction">
    <interactant intactId="EBI-12187137">
        <id>Q9BXU9</id>
    </interactant>
    <interactant intactId="EBI-8652744">
        <id>Q96IW7</id>
        <label>SEC22A</label>
    </interactant>
    <organismsDiffer>false</organismsDiffer>
    <experiments>3</experiments>
</comment>
<comment type="interaction">
    <interactant intactId="EBI-12187137">
        <id>Q9BXU9</id>
    </interactant>
    <interactant intactId="EBI-355293">
        <id>P03973</id>
        <label>SLPI</label>
    </interactant>
    <organismsDiffer>false</organismsDiffer>
    <experiments>3</experiments>
</comment>
<comment type="interaction">
    <interactant intactId="EBI-12187137">
        <id>Q9BXU9</id>
    </interactant>
    <interactant intactId="EBI-742842">
        <id>Q9NZ43</id>
        <label>USE1</label>
    </interactant>
    <organismsDiffer>false</organismsDiffer>
    <experiments>3</experiments>
</comment>
<comment type="subcellular location">
    <subcellularLocation>
        <location evidence="8">Golgi apparatus</location>
        <location evidence="8">trans-Golgi network membrane</location>
        <topology evidence="8">Single-pass type IV membrane protein</topology>
    </subcellularLocation>
    <subcellularLocation>
        <location evidence="6">Cytoplasm</location>
        <location evidence="6">Perinuclear region</location>
    </subcellularLocation>
    <subcellularLocation>
        <location evidence="8">Cell membrane</location>
        <topology evidence="8">Single-pass type IV membrane protein</topology>
    </subcellularLocation>
</comment>
<comment type="alternative products">
    <event type="alternative splicing"/>
    <isoform>
        <id>Q9BXU9-2</id>
        <name>1</name>
        <sequence type="displayed"/>
    </isoform>
    <isoform>
        <id>Q9BXU9-1</id>
        <name>2</name>
        <sequence type="described" ref="VSP_060873"/>
    </isoform>
</comment>
<comment type="tissue specificity">
    <text evidence="5">Brain specific.</text>
</comment>
<comment type="domain">
    <text evidence="6">The C-terminal transmembrane domain (TMD) is necessary and sufficient for membrane targeting.</text>
</comment>
<comment type="sequence caution" evidence="7">
    <conflict type="erroneous initiation">
        <sequence resource="EMBL-CDS" id="AAG09620"/>
    </conflict>
    <text>Truncated N-terminus.</text>
</comment>
<name>CABP8_HUMAN</name>
<feature type="chain" id="PRO_0000073529" description="Calcium-binding protein 8">
    <location>
        <begin position="1"/>
        <end position="261"/>
    </location>
</feature>
<feature type="topological domain" description="Cytoplasmic" evidence="2">
    <location>
        <begin position="1"/>
        <end position="234"/>
    </location>
</feature>
<feature type="transmembrane region" description="Helical; Anchor for type IV membrane protein" evidence="2">
    <location>
        <begin position="235"/>
        <end position="255"/>
    </location>
</feature>
<feature type="topological domain" description="Extracellular" evidence="2">
    <location>
        <begin position="256"/>
        <end position="261"/>
    </location>
</feature>
<feature type="domain" description="EF-hand 1" evidence="3">
    <location>
        <begin position="78"/>
        <end position="113"/>
    </location>
</feature>
<feature type="domain" description="EF-hand 2" evidence="3">
    <location>
        <begin position="114"/>
        <end position="149"/>
    </location>
</feature>
<feature type="region of interest" description="Disordered" evidence="4">
    <location>
        <begin position="1"/>
        <end position="39"/>
    </location>
</feature>
<feature type="compositionally biased region" description="Basic and acidic residues" evidence="4">
    <location>
        <begin position="8"/>
        <end position="19"/>
    </location>
</feature>
<feature type="binding site" evidence="3">
    <location>
        <position position="91"/>
    </location>
    <ligand>
        <name>Ca(2+)</name>
        <dbReference type="ChEBI" id="CHEBI:29108"/>
        <label>1</label>
    </ligand>
</feature>
<feature type="binding site" evidence="3">
    <location>
        <position position="93"/>
    </location>
    <ligand>
        <name>Ca(2+)</name>
        <dbReference type="ChEBI" id="CHEBI:29108"/>
        <label>1</label>
    </ligand>
</feature>
<feature type="binding site" evidence="3">
    <location>
        <position position="95"/>
    </location>
    <ligand>
        <name>Ca(2+)</name>
        <dbReference type="ChEBI" id="CHEBI:29108"/>
        <label>1</label>
    </ligand>
</feature>
<feature type="binding site" evidence="3">
    <location>
        <position position="102"/>
    </location>
    <ligand>
        <name>Ca(2+)</name>
        <dbReference type="ChEBI" id="CHEBI:29108"/>
        <label>1</label>
    </ligand>
</feature>
<feature type="binding site" evidence="3">
    <location>
        <position position="127"/>
    </location>
    <ligand>
        <name>Ca(2+)</name>
        <dbReference type="ChEBI" id="CHEBI:29108"/>
        <label>2</label>
    </ligand>
</feature>
<feature type="binding site" evidence="3">
    <location>
        <position position="129"/>
    </location>
    <ligand>
        <name>Ca(2+)</name>
        <dbReference type="ChEBI" id="CHEBI:29108"/>
        <label>2</label>
    </ligand>
</feature>
<feature type="binding site" evidence="3">
    <location>
        <position position="131"/>
    </location>
    <ligand>
        <name>Ca(2+)</name>
        <dbReference type="ChEBI" id="CHEBI:29108"/>
        <label>2</label>
    </ligand>
</feature>
<feature type="binding site" evidence="3">
    <location>
        <position position="133"/>
    </location>
    <ligand>
        <name>Ca(2+)</name>
        <dbReference type="ChEBI" id="CHEBI:29108"/>
        <label>2</label>
    </ligand>
</feature>
<feature type="binding site" evidence="3">
    <location>
        <position position="138"/>
    </location>
    <ligand>
        <name>Ca(2+)</name>
        <dbReference type="ChEBI" id="CHEBI:29108"/>
        <label>2</label>
    </ligand>
</feature>
<feature type="splice variant" id="VSP_060873" description="In isoform 2." evidence="7">
    <location>
        <begin position="1"/>
        <end position="42"/>
    </location>
</feature>
<sequence>MRLPEQPGEGKPENEKKGDGGALGGGEEPPRSQAPDFPTWEKMPFHHVTAGLLYKGNYLNRSLSAGSDSEQLANISVEELDEIREAFRVLDRDGNGFISKQELGMAMRSLGYMPSEVELAIIMQRLDMDGDGQVDFDEFMTILGPKLVSSEGRDGFLGNTIDSIFWQFDMQRITLEELKHILYHAFRDHLTMKDIENIIINEEESLNETSGNCQTEFEGVHSQKQNRQTCVRKSLICAFAMAFIISVMLIAANQILRSGME</sequence>
<evidence type="ECO:0000250" key="1">
    <source>
        <dbReference type="UniProtKB" id="Q06BI3"/>
    </source>
</evidence>
<evidence type="ECO:0000255" key="2"/>
<evidence type="ECO:0000255" key="3">
    <source>
        <dbReference type="PROSITE-ProRule" id="PRU00448"/>
    </source>
</evidence>
<evidence type="ECO:0000256" key="4">
    <source>
        <dbReference type="SAM" id="MobiDB-lite"/>
    </source>
</evidence>
<evidence type="ECO:0000269" key="5">
    <source>
    </source>
</evidence>
<evidence type="ECO:0000269" key="6">
    <source>
    </source>
</evidence>
<evidence type="ECO:0000305" key="7"/>
<evidence type="ECO:0000305" key="8">
    <source>
    </source>
</evidence>
<organism>
    <name type="scientific">Homo sapiens</name>
    <name type="common">Human</name>
    <dbReference type="NCBI Taxonomy" id="9606"/>
    <lineage>
        <taxon>Eukaryota</taxon>
        <taxon>Metazoa</taxon>
        <taxon>Chordata</taxon>
        <taxon>Craniata</taxon>
        <taxon>Vertebrata</taxon>
        <taxon>Euteleostomi</taxon>
        <taxon>Mammalia</taxon>
        <taxon>Eutheria</taxon>
        <taxon>Euarchontoglires</taxon>
        <taxon>Primates</taxon>
        <taxon>Haplorrhini</taxon>
        <taxon>Catarrhini</taxon>
        <taxon>Hominidae</taxon>
        <taxon>Homo</taxon>
    </lineage>
</organism>